<keyword id="KW-0963">Cytoplasm</keyword>
<keyword id="KW-1185">Reference proteome</keyword>
<feature type="chain" id="PRO_0000207636" description="Uncharacterized protein C22G7.07c">
    <location>
        <begin position="1"/>
        <end position="419"/>
    </location>
</feature>
<organism>
    <name type="scientific">Schizosaccharomyces pombe (strain 972 / ATCC 24843)</name>
    <name type="common">Fission yeast</name>
    <dbReference type="NCBI Taxonomy" id="284812"/>
    <lineage>
        <taxon>Eukaryota</taxon>
        <taxon>Fungi</taxon>
        <taxon>Dikarya</taxon>
        <taxon>Ascomycota</taxon>
        <taxon>Taphrinomycotina</taxon>
        <taxon>Schizosaccharomycetes</taxon>
        <taxon>Schizosaccharomycetales</taxon>
        <taxon>Schizosaccharomycetaceae</taxon>
        <taxon>Schizosaccharomyces</taxon>
    </lineage>
</organism>
<proteinExistence type="inferred from homology"/>
<gene>
    <name type="ORF">SPAC22G7.07c</name>
</gene>
<protein>
    <recommendedName>
        <fullName>Uncharacterized protein C22G7.07c</fullName>
    </recommendedName>
</protein>
<dbReference type="EMBL" id="CU329670">
    <property type="protein sequence ID" value="CAA91131.2"/>
    <property type="molecule type" value="Genomic_DNA"/>
</dbReference>
<dbReference type="PIR" id="T11617">
    <property type="entry name" value="T11617"/>
</dbReference>
<dbReference type="SMR" id="Q09800"/>
<dbReference type="BioGRID" id="278165">
    <property type="interactions" value="12"/>
</dbReference>
<dbReference type="FunCoup" id="Q09800">
    <property type="interactions" value="24"/>
</dbReference>
<dbReference type="STRING" id="284812.Q09800"/>
<dbReference type="PaxDb" id="4896-SPAC22G7.07c.1"/>
<dbReference type="EnsemblFungi" id="SPAC22G7.07c.1">
    <property type="protein sequence ID" value="SPAC22G7.07c.1:pep"/>
    <property type="gene ID" value="SPAC22G7.07c"/>
</dbReference>
<dbReference type="KEGG" id="spo:2541669"/>
<dbReference type="PomBase" id="SPAC22G7.07c"/>
<dbReference type="VEuPathDB" id="FungiDB:SPAC22G7.07c"/>
<dbReference type="eggNOG" id="KOG2356">
    <property type="taxonomic scope" value="Eukaryota"/>
</dbReference>
<dbReference type="HOGENOM" id="CLU_027091_4_0_1"/>
<dbReference type="InParanoid" id="Q09800"/>
<dbReference type="OMA" id="PDYHSRK"/>
<dbReference type="PRO" id="PR:Q09800"/>
<dbReference type="Proteomes" id="UP000002485">
    <property type="component" value="Chromosome I"/>
</dbReference>
<dbReference type="GO" id="GO:0005829">
    <property type="term" value="C:cytosol"/>
    <property type="evidence" value="ECO:0007005"/>
    <property type="project" value="PomBase"/>
</dbReference>
<dbReference type="GO" id="GO:0008168">
    <property type="term" value="F:methyltransferase activity"/>
    <property type="evidence" value="ECO:0000318"/>
    <property type="project" value="GO_Central"/>
</dbReference>
<dbReference type="GO" id="GO:0001734">
    <property type="term" value="F:mRNA m(6)A methyltransferase activity"/>
    <property type="evidence" value="ECO:0000266"/>
    <property type="project" value="PomBase"/>
</dbReference>
<dbReference type="GO" id="GO:0006397">
    <property type="term" value="P:mRNA processing"/>
    <property type="evidence" value="ECO:0000266"/>
    <property type="project" value="PomBase"/>
</dbReference>
<dbReference type="InterPro" id="IPR007757">
    <property type="entry name" value="MT-A70-like"/>
</dbReference>
<dbReference type="InterPro" id="IPR029063">
    <property type="entry name" value="SAM-dependent_MTases_sf"/>
</dbReference>
<dbReference type="PANTHER" id="PTHR12829:SF4">
    <property type="entry name" value="N(6)-ADENINE-SPECIFIC METHYLTRANSFERASE METTL4"/>
    <property type="match status" value="1"/>
</dbReference>
<dbReference type="PANTHER" id="PTHR12829">
    <property type="entry name" value="N6-ADENOSINE-METHYLTRANSFERASE"/>
    <property type="match status" value="1"/>
</dbReference>
<dbReference type="Pfam" id="PF05063">
    <property type="entry name" value="MT-A70"/>
    <property type="match status" value="1"/>
</dbReference>
<dbReference type="SUPFAM" id="SSF53335">
    <property type="entry name" value="S-adenosyl-L-methionine-dependent methyltransferases"/>
    <property type="match status" value="1"/>
</dbReference>
<dbReference type="PROSITE" id="PS51143">
    <property type="entry name" value="MT_A70"/>
    <property type="match status" value="1"/>
</dbReference>
<dbReference type="PROSITE" id="PS00092">
    <property type="entry name" value="N6_MTASE"/>
    <property type="match status" value="1"/>
</dbReference>
<comment type="subcellular location">
    <subcellularLocation>
        <location evidence="2">Cytoplasm</location>
    </subcellularLocation>
</comment>
<comment type="similarity">
    <text evidence="1">Belongs to the MT-A70-like family.</text>
</comment>
<sequence>MPCILYMDDTSCLIDLPTSLQFNKHILPTRTKPVVKPYLLPEKSTSDYENSGKGTVGQVLQSLQRVRRALQLRSLDDNQSTDKSHHVQFQDIVYRSNTSASEIHFQAENAPLVQWYSDIFKVLVKAPVIQFEDQCLQWLKMLNTIPPSYSFITIKSKDTVELGLEEIYQQCVQNDGASAIKLKLKGSKVITESSETNCRDSIYYIPARSSFIMGDVEKTAQILLEAIDGHLEKPKCIIIDPPWPNKSVARSSVYKVNRNLGYLKALPIQESLSKTGVVAVWCTNKEKYVNFVKKVLFKKWNLTLVSTWTWLKITAFGEPLFDVYSNMRKPWEQLLIGVTSEYTSVYSDKIPPTFTIIGIPDYHSRKPSLKPFISRWFNCSANESLPVLEIFGRSLTPNWITWGREPLLFMHELYWSSDN</sequence>
<evidence type="ECO:0000255" key="1">
    <source>
        <dbReference type="PROSITE-ProRule" id="PRU00489"/>
    </source>
</evidence>
<evidence type="ECO:0000269" key="2">
    <source>
    </source>
</evidence>
<reference key="1">
    <citation type="journal article" date="2002" name="Nature">
        <title>The genome sequence of Schizosaccharomyces pombe.</title>
        <authorList>
            <person name="Wood V."/>
            <person name="Gwilliam R."/>
            <person name="Rajandream M.A."/>
            <person name="Lyne M.H."/>
            <person name="Lyne R."/>
            <person name="Stewart A."/>
            <person name="Sgouros J.G."/>
            <person name="Peat N."/>
            <person name="Hayles J."/>
            <person name="Baker S.G."/>
            <person name="Basham D."/>
            <person name="Bowman S."/>
            <person name="Brooks K."/>
            <person name="Brown D."/>
            <person name="Brown S."/>
            <person name="Chillingworth T."/>
            <person name="Churcher C.M."/>
            <person name="Collins M."/>
            <person name="Connor R."/>
            <person name="Cronin A."/>
            <person name="Davis P."/>
            <person name="Feltwell T."/>
            <person name="Fraser A."/>
            <person name="Gentles S."/>
            <person name="Goble A."/>
            <person name="Hamlin N."/>
            <person name="Harris D.E."/>
            <person name="Hidalgo J."/>
            <person name="Hodgson G."/>
            <person name="Holroyd S."/>
            <person name="Hornsby T."/>
            <person name="Howarth S."/>
            <person name="Huckle E.J."/>
            <person name="Hunt S."/>
            <person name="Jagels K."/>
            <person name="James K.D."/>
            <person name="Jones L."/>
            <person name="Jones M."/>
            <person name="Leather S."/>
            <person name="McDonald S."/>
            <person name="McLean J."/>
            <person name="Mooney P."/>
            <person name="Moule S."/>
            <person name="Mungall K.L."/>
            <person name="Murphy L.D."/>
            <person name="Niblett D."/>
            <person name="Odell C."/>
            <person name="Oliver K."/>
            <person name="O'Neil S."/>
            <person name="Pearson D."/>
            <person name="Quail M.A."/>
            <person name="Rabbinowitsch E."/>
            <person name="Rutherford K.M."/>
            <person name="Rutter S."/>
            <person name="Saunders D."/>
            <person name="Seeger K."/>
            <person name="Sharp S."/>
            <person name="Skelton J."/>
            <person name="Simmonds M.N."/>
            <person name="Squares R."/>
            <person name="Squares S."/>
            <person name="Stevens K."/>
            <person name="Taylor K."/>
            <person name="Taylor R.G."/>
            <person name="Tivey A."/>
            <person name="Walsh S.V."/>
            <person name="Warren T."/>
            <person name="Whitehead S."/>
            <person name="Woodward J.R."/>
            <person name="Volckaert G."/>
            <person name="Aert R."/>
            <person name="Robben J."/>
            <person name="Grymonprez B."/>
            <person name="Weltjens I."/>
            <person name="Vanstreels E."/>
            <person name="Rieger M."/>
            <person name="Schaefer M."/>
            <person name="Mueller-Auer S."/>
            <person name="Gabel C."/>
            <person name="Fuchs M."/>
            <person name="Duesterhoeft A."/>
            <person name="Fritzc C."/>
            <person name="Holzer E."/>
            <person name="Moestl D."/>
            <person name="Hilbert H."/>
            <person name="Borzym K."/>
            <person name="Langer I."/>
            <person name="Beck A."/>
            <person name="Lehrach H."/>
            <person name="Reinhardt R."/>
            <person name="Pohl T.M."/>
            <person name="Eger P."/>
            <person name="Zimmermann W."/>
            <person name="Wedler H."/>
            <person name="Wambutt R."/>
            <person name="Purnelle B."/>
            <person name="Goffeau A."/>
            <person name="Cadieu E."/>
            <person name="Dreano S."/>
            <person name="Gloux S."/>
            <person name="Lelaure V."/>
            <person name="Mottier S."/>
            <person name="Galibert F."/>
            <person name="Aves S.J."/>
            <person name="Xiang Z."/>
            <person name="Hunt C."/>
            <person name="Moore K."/>
            <person name="Hurst S.M."/>
            <person name="Lucas M."/>
            <person name="Rochet M."/>
            <person name="Gaillardin C."/>
            <person name="Tallada V.A."/>
            <person name="Garzon A."/>
            <person name="Thode G."/>
            <person name="Daga R.R."/>
            <person name="Cruzado L."/>
            <person name="Jimenez J."/>
            <person name="Sanchez M."/>
            <person name="del Rey F."/>
            <person name="Benito J."/>
            <person name="Dominguez A."/>
            <person name="Revuelta J.L."/>
            <person name="Moreno S."/>
            <person name="Armstrong J."/>
            <person name="Forsburg S.L."/>
            <person name="Cerutti L."/>
            <person name="Lowe T."/>
            <person name="McCombie W.R."/>
            <person name="Paulsen I."/>
            <person name="Potashkin J."/>
            <person name="Shpakovski G.V."/>
            <person name="Ussery D."/>
            <person name="Barrell B.G."/>
            <person name="Nurse P."/>
        </authorList>
    </citation>
    <scope>NUCLEOTIDE SEQUENCE [LARGE SCALE GENOMIC DNA]</scope>
    <source>
        <strain>972 / ATCC 24843</strain>
    </source>
</reference>
<reference key="2">
    <citation type="journal article" date="2011" name="Science">
        <title>Comparative functional genomics of the fission yeasts.</title>
        <authorList>
            <person name="Rhind N."/>
            <person name="Chen Z."/>
            <person name="Yassour M."/>
            <person name="Thompson D.A."/>
            <person name="Haas B.J."/>
            <person name="Habib N."/>
            <person name="Wapinski I."/>
            <person name="Roy S."/>
            <person name="Lin M.F."/>
            <person name="Heiman D.I."/>
            <person name="Young S.K."/>
            <person name="Furuya K."/>
            <person name="Guo Y."/>
            <person name="Pidoux A."/>
            <person name="Chen H.M."/>
            <person name="Robbertse B."/>
            <person name="Goldberg J.M."/>
            <person name="Aoki K."/>
            <person name="Bayne E.H."/>
            <person name="Berlin A.M."/>
            <person name="Desjardins C.A."/>
            <person name="Dobbs E."/>
            <person name="Dukaj L."/>
            <person name="Fan L."/>
            <person name="FitzGerald M.G."/>
            <person name="French C."/>
            <person name="Gujja S."/>
            <person name="Hansen K."/>
            <person name="Keifenheim D."/>
            <person name="Levin J.Z."/>
            <person name="Mosher R.A."/>
            <person name="Mueller C.A."/>
            <person name="Pfiffner J."/>
            <person name="Priest M."/>
            <person name="Russ C."/>
            <person name="Smialowska A."/>
            <person name="Swoboda P."/>
            <person name="Sykes S.M."/>
            <person name="Vaughn M."/>
            <person name="Vengrova S."/>
            <person name="Yoder R."/>
            <person name="Zeng Q."/>
            <person name="Allshire R."/>
            <person name="Baulcombe D."/>
            <person name="Birren B.W."/>
            <person name="Brown W."/>
            <person name="Ekwall K."/>
            <person name="Kellis M."/>
            <person name="Leatherwood J."/>
            <person name="Levin H."/>
            <person name="Margalit H."/>
            <person name="Martienssen R."/>
            <person name="Nieduszynski C.A."/>
            <person name="Spatafora J.W."/>
            <person name="Friedman N."/>
            <person name="Dalgaard J.Z."/>
            <person name="Baumann P."/>
            <person name="Niki H."/>
            <person name="Regev A."/>
            <person name="Nusbaum C."/>
        </authorList>
    </citation>
    <scope>REVISION OF GENE MODEL</scope>
</reference>
<reference key="3">
    <citation type="journal article" date="2006" name="Nat. Biotechnol.">
        <title>ORFeome cloning and global analysis of protein localization in the fission yeast Schizosaccharomyces pombe.</title>
        <authorList>
            <person name="Matsuyama A."/>
            <person name="Arai R."/>
            <person name="Yashiroda Y."/>
            <person name="Shirai A."/>
            <person name="Kamata A."/>
            <person name="Sekido S."/>
            <person name="Kobayashi Y."/>
            <person name="Hashimoto A."/>
            <person name="Hamamoto M."/>
            <person name="Hiraoka Y."/>
            <person name="Horinouchi S."/>
            <person name="Yoshida M."/>
        </authorList>
    </citation>
    <scope>SUBCELLULAR LOCATION [LARGE SCALE ANALYSIS]</scope>
</reference>
<accession>Q09800</accession>
<name>YAA7_SCHPO</name>